<dbReference type="EMBL" id="AJ251337">
    <property type="protein sequence ID" value="CAC09589.1"/>
    <property type="molecule type" value="Genomic_DNA"/>
</dbReference>
<dbReference type="SMR" id="Q9F416"/>
<dbReference type="STRING" id="1793.AWC04_06595"/>
<dbReference type="GO" id="GO:0005829">
    <property type="term" value="C:cytosol"/>
    <property type="evidence" value="ECO:0007669"/>
    <property type="project" value="TreeGrafter"/>
</dbReference>
<dbReference type="GO" id="GO:0005524">
    <property type="term" value="F:ATP binding"/>
    <property type="evidence" value="ECO:0007669"/>
    <property type="project" value="UniProtKB-KW"/>
</dbReference>
<dbReference type="GO" id="GO:0008094">
    <property type="term" value="F:ATP-dependent activity, acting on DNA"/>
    <property type="evidence" value="ECO:0007669"/>
    <property type="project" value="InterPro"/>
</dbReference>
<dbReference type="GO" id="GO:0004519">
    <property type="term" value="F:endonuclease activity"/>
    <property type="evidence" value="ECO:0007669"/>
    <property type="project" value="InterPro"/>
</dbReference>
<dbReference type="GO" id="GO:0003697">
    <property type="term" value="F:single-stranded DNA binding"/>
    <property type="evidence" value="ECO:0007669"/>
    <property type="project" value="InterPro"/>
</dbReference>
<dbReference type="GO" id="GO:0006310">
    <property type="term" value="P:DNA recombination"/>
    <property type="evidence" value="ECO:0007669"/>
    <property type="project" value="UniProtKB-KW"/>
</dbReference>
<dbReference type="GO" id="GO:0006281">
    <property type="term" value="P:DNA repair"/>
    <property type="evidence" value="ECO:0007669"/>
    <property type="project" value="UniProtKB-KW"/>
</dbReference>
<dbReference type="GO" id="GO:0016539">
    <property type="term" value="P:intein-mediated protein splicing"/>
    <property type="evidence" value="ECO:0007669"/>
    <property type="project" value="InterPro"/>
</dbReference>
<dbReference type="GO" id="GO:0009432">
    <property type="term" value="P:SOS response"/>
    <property type="evidence" value="ECO:0007669"/>
    <property type="project" value="UniProtKB-KW"/>
</dbReference>
<dbReference type="CDD" id="cd00081">
    <property type="entry name" value="Hint"/>
    <property type="match status" value="2"/>
</dbReference>
<dbReference type="Gene3D" id="2.170.16.10">
    <property type="entry name" value="Hedgehog/Intein (Hint) domain"/>
    <property type="match status" value="1"/>
</dbReference>
<dbReference type="Gene3D" id="3.10.28.10">
    <property type="entry name" value="Homing endonucleases"/>
    <property type="match status" value="2"/>
</dbReference>
<dbReference type="Gene3D" id="3.40.50.300">
    <property type="entry name" value="P-loop containing nucleotide triphosphate hydrolases"/>
    <property type="match status" value="1"/>
</dbReference>
<dbReference type="InterPro" id="IPR013765">
    <property type="entry name" value="DNA_recomb/repair_RecA"/>
</dbReference>
<dbReference type="InterPro" id="IPR020584">
    <property type="entry name" value="DNA_recomb/repair_RecA_CS"/>
</dbReference>
<dbReference type="InterPro" id="IPR003586">
    <property type="entry name" value="Hint_dom_C"/>
</dbReference>
<dbReference type="InterPro" id="IPR003587">
    <property type="entry name" value="Hint_dom_N"/>
</dbReference>
<dbReference type="InterPro" id="IPR036844">
    <property type="entry name" value="Hint_dom_sf"/>
</dbReference>
<dbReference type="InterPro" id="IPR027434">
    <property type="entry name" value="Homing_endonucl"/>
</dbReference>
<dbReference type="InterPro" id="IPR030934">
    <property type="entry name" value="Intein_C"/>
</dbReference>
<dbReference type="InterPro" id="IPR006141">
    <property type="entry name" value="Intein_N"/>
</dbReference>
<dbReference type="InterPro" id="IPR004860">
    <property type="entry name" value="LAGLIDADG_dom"/>
</dbReference>
<dbReference type="InterPro" id="IPR027417">
    <property type="entry name" value="P-loop_NTPase"/>
</dbReference>
<dbReference type="InterPro" id="IPR049428">
    <property type="entry name" value="RecA-like_N"/>
</dbReference>
<dbReference type="InterPro" id="IPR020587">
    <property type="entry name" value="RecA_monomer-monomer_interface"/>
</dbReference>
<dbReference type="NCBIfam" id="TIGR01443">
    <property type="entry name" value="intein_Cterm"/>
    <property type="match status" value="1"/>
</dbReference>
<dbReference type="NCBIfam" id="TIGR01445">
    <property type="entry name" value="intein_Nterm"/>
    <property type="match status" value="1"/>
</dbReference>
<dbReference type="PANTHER" id="PTHR45900:SF1">
    <property type="entry name" value="MITOCHONDRIAL DNA REPAIR PROTEIN RECA HOMOLOG-RELATED"/>
    <property type="match status" value="1"/>
</dbReference>
<dbReference type="PANTHER" id="PTHR45900">
    <property type="entry name" value="RECA"/>
    <property type="match status" value="1"/>
</dbReference>
<dbReference type="Pfam" id="PF03161">
    <property type="entry name" value="LAGLIDADG_2"/>
    <property type="match status" value="1"/>
</dbReference>
<dbReference type="Pfam" id="PF00154">
    <property type="entry name" value="RecA"/>
    <property type="match status" value="1"/>
</dbReference>
<dbReference type="PRINTS" id="PR00142">
    <property type="entry name" value="RECA"/>
</dbReference>
<dbReference type="SMART" id="SM00305">
    <property type="entry name" value="HintC"/>
    <property type="match status" value="1"/>
</dbReference>
<dbReference type="SMART" id="SM00306">
    <property type="entry name" value="HintN"/>
    <property type="match status" value="1"/>
</dbReference>
<dbReference type="SUPFAM" id="SSF51294">
    <property type="entry name" value="Hedgehog/intein (Hint) domain"/>
    <property type="match status" value="1"/>
</dbReference>
<dbReference type="SUPFAM" id="SSF55608">
    <property type="entry name" value="Homing endonucleases"/>
    <property type="match status" value="1"/>
</dbReference>
<dbReference type="SUPFAM" id="SSF52540">
    <property type="entry name" value="P-loop containing nucleoside triphosphate hydrolases"/>
    <property type="match status" value="1"/>
</dbReference>
<dbReference type="PROSITE" id="PS50818">
    <property type="entry name" value="INTEIN_C_TER"/>
    <property type="match status" value="1"/>
</dbReference>
<dbReference type="PROSITE" id="PS50817">
    <property type="entry name" value="INTEIN_N_TER"/>
    <property type="match status" value="1"/>
</dbReference>
<dbReference type="PROSITE" id="PS00321">
    <property type="entry name" value="RECA_1"/>
    <property type="match status" value="1"/>
</dbReference>
<dbReference type="PROSITE" id="PS50163">
    <property type="entry name" value="RECA_3"/>
    <property type="match status" value="1"/>
</dbReference>
<accession>Q9F416</accession>
<protein>
    <recommendedName>
        <fullName>Protein RecA</fullName>
    </recommendedName>
    <alternativeName>
        <fullName>Recombinase A</fullName>
    </alternativeName>
    <component>
        <recommendedName>
            <fullName>Mfa RecA intein</fullName>
        </recommendedName>
    </component>
</protein>
<evidence type="ECO:0000250" key="1"/>
<evidence type="ECO:0000255" key="2"/>
<evidence type="ECO:0000305" key="3"/>
<proteinExistence type="inferred from homology"/>
<comment type="function">
    <text evidence="1">Can catalyze the hydrolysis of ATP in the presence of single-stranded DNA, the ATP-dependent uptake of single-stranded DNA by duplex DNA, and the ATP-dependent hybridization of homologous single-stranded DNAs. It interacts with LexA causing its activation and leading to its autocatalytic cleavage (By similarity).</text>
</comment>
<comment type="subcellular location">
    <subcellularLocation>
        <location evidence="1">Cytoplasm</location>
    </subcellularLocation>
</comment>
<comment type="PTM">
    <text evidence="1">This protein undergoes a protein self splicing that involves a post-translational excision of the intervening region (intein) followed by peptide ligation.</text>
</comment>
<comment type="similarity">
    <text evidence="3">Belongs to the RecA family.</text>
</comment>
<reference key="1">
    <citation type="journal article" date="2000" name="FEBS Lett.">
        <title>Inteins invading mycobacterial RecA proteins.</title>
        <authorList>
            <person name="Saves I."/>
            <person name="Laneelle M.-A."/>
            <person name="Daffe M."/>
            <person name="Masson J.-M."/>
        </authorList>
    </citation>
    <scope>NUCLEOTIDE SEQUENCE [GENOMIC DNA]</scope>
    <source>
        <strain>ATCC 35219 / DSM 44179 / JCM 6405 / KCTC 9508 / CIP 81.39</strain>
    </source>
</reference>
<gene>
    <name type="primary">recA</name>
</gene>
<sequence>REKIGVMFGCFSYGTRVQLADGSTEKIGKIVNQKMDVEVMSYDPVTDQIVPRKVVNWFNNGPAEQFLQFTVEKSGGNGRSQFAATPNHLIRTPAGWTEAGDLIAGDRVLAAERHLLSDQQFQVILGSLMGGGNLSPNLHDRNGVRFRMGHGARQADYLEWKTALLGNIGHSVRENDQGARFVDFTPLPELGELRRAVYLGDGKKFLSEDYLKALTPLALAVWYMDDGSFTVRSKGVQQRTQGGSGRIEICVEAMAEGTRERLRDYLRDTHGLDVRLRSAGSGKSMLTFSTEATAKFQELVAPHMAPSMEHKLLPRFRGLGTVEPRFVEPAQRLVPARVLDVQVKPRTRSMNRFDIEVEGNHNYFVDGVMVHNSPETTTGGKALKFYASVRMDVRRIETLKDGSDAVGNRTRVKVVKNKVSPP</sequence>
<keyword id="KW-0067">ATP-binding</keyword>
<keyword id="KW-0068">Autocatalytic cleavage</keyword>
<keyword id="KW-0963">Cytoplasm</keyword>
<keyword id="KW-0227">DNA damage</keyword>
<keyword id="KW-0233">DNA recombination</keyword>
<keyword id="KW-0234">DNA repair</keyword>
<keyword id="KW-0238">DNA-binding</keyword>
<keyword id="KW-0547">Nucleotide-binding</keyword>
<keyword id="KW-0651">Protein splicing</keyword>
<keyword id="KW-0742">SOS response</keyword>
<feature type="chain" id="PRO_0000030251" description="Protein RecA, 1st part" evidence="2">
    <location>
        <begin position="1" status="less than"/>
        <end position="9"/>
    </location>
</feature>
<feature type="chain" id="PRO_0000030252" description="Mfa RecA intein" evidence="2">
    <location>
        <begin position="10"/>
        <end position="372"/>
    </location>
</feature>
<feature type="chain" id="PRO_0000030253" description="Protein RecA, 2nd part" evidence="2">
    <location>
        <begin position="373"/>
        <end position="422" status="greater than"/>
    </location>
</feature>
<feature type="non-terminal residue">
    <location>
        <position position="1"/>
    </location>
</feature>
<feature type="non-terminal residue">
    <location>
        <position position="422"/>
    </location>
</feature>
<organism>
    <name type="scientific">Mycolicibacterium fallax</name>
    <name type="common">Mycobacterium fallax</name>
    <dbReference type="NCBI Taxonomy" id="1793"/>
    <lineage>
        <taxon>Bacteria</taxon>
        <taxon>Bacillati</taxon>
        <taxon>Actinomycetota</taxon>
        <taxon>Actinomycetes</taxon>
        <taxon>Mycobacteriales</taxon>
        <taxon>Mycobacteriaceae</taxon>
        <taxon>Mycolicibacterium</taxon>
    </lineage>
</organism>
<name>RECA_MYCFA</name>